<feature type="chain" id="PRO_0000419384" description="Protein PA-X">
    <location>
        <begin position="1"/>
        <end position="252"/>
    </location>
</feature>
<feature type="active site" evidence="2">
    <location>
        <position position="80"/>
    </location>
</feature>
<feature type="active site" evidence="2">
    <location>
        <position position="108"/>
    </location>
</feature>
<feature type="site" description="Important for efficient shutoff activity and nuclear localization" evidence="4">
    <location>
        <position position="195"/>
    </location>
</feature>
<feature type="site" description="Important for efficient shutoff activity and nuclear localization" evidence="4">
    <location>
        <position position="198"/>
    </location>
</feature>
<feature type="site" description="Important for efficient shutoff activity and nuclear localization" evidence="4">
    <location>
        <position position="199"/>
    </location>
</feature>
<feature type="site" description="Important for efficient shutoff activity" evidence="3">
    <location>
        <position position="202"/>
    </location>
</feature>
<feature type="site" description="Important for efficient shutoff activity" evidence="3">
    <location>
        <position position="203"/>
    </location>
</feature>
<feature type="site" description="Important for efficient shutoff activity" evidence="3">
    <location>
        <position position="206"/>
    </location>
</feature>
<proteinExistence type="inferred from homology"/>
<comment type="function">
    <text evidence="1 4">Plays a major role in the shutoff of the host protein expression by cleaving mRNAs probably via an endonuclease activity. This host shutoff allows the virus to escape from the host antiviral response (By similarity). Hijacks host RNA splicing machinery to selectively target host RNAs containing introns for destruction. This may explain the preferential degradation of RNAs that have undergone co- or post-transcriptional processing (By similarity).</text>
</comment>
<comment type="subcellular location">
    <subcellularLocation>
        <location evidence="4">Host cytoplasm</location>
    </subcellularLocation>
    <subcellularLocation>
        <location evidence="4">Host nucleus</location>
    </subcellularLocation>
</comment>
<comment type="alternative products">
    <event type="ribosomal frameshifting"/>
    <isoform>
        <id>P0DJS1-1</id>
        <name>PA-X</name>
        <sequence type="displayed"/>
    </isoform>
    <isoform>
        <id>Q1K9Q4-1</id>
        <name>PA</name>
        <sequence type="external"/>
    </isoform>
</comment>
<comment type="domain">
    <text evidence="1 4">The probable endonuclease active site in the N-terminus and the basic amino acid cluster in the C-terminus are important for the shutoff activity. The C-terminus acts as a nuclear localization signal (By similarity). The C-terminus is recruited to host protein complexes involved in nuclear Pol II RNA processing (By similarity).</text>
</comment>
<comment type="similarity">
    <text evidence="5">Belongs to the influenza viruses PA-X family.</text>
</comment>
<name>PAX_I57A0</name>
<protein>
    <recommendedName>
        <fullName>Protein PA-X</fullName>
    </recommendedName>
</protein>
<sequence length="252" mass="29323">MEDFVRQCFNPMIVELAEKAMKEYGEDPKIETNKFAAICTHLEVCFMYSDFHFINEQGESIIVELDDPNALLKHRFEIIEGRDRTMAWTVVNSICNTTGAEKPKFLPDLYDYKENRFIEIGVTRREVHIYYLEKANKIKSEKTHIHIFSFTGEEMATKADYTLDEESRARIKTRLFTIRQEMASRGLWDSFVSPKEAKKQLKKDLKSQGQCAGSPTKVSRRTSPALRILEPMWMDSNRTATLRASFLKCPKK</sequence>
<organism>
    <name type="scientific">Influenza A virus (strain A/Japan/305/1957 H2N2)</name>
    <dbReference type="NCBI Taxonomy" id="387161"/>
    <lineage>
        <taxon>Viruses</taxon>
        <taxon>Riboviria</taxon>
        <taxon>Orthornavirae</taxon>
        <taxon>Negarnaviricota</taxon>
        <taxon>Polyploviricotina</taxon>
        <taxon>Insthoviricetes</taxon>
        <taxon>Articulavirales</taxon>
        <taxon>Orthomyxoviridae</taxon>
        <taxon>Alphainfluenzavirus</taxon>
        <taxon>Alphainfluenzavirus influenzae</taxon>
        <taxon>Influenza A virus</taxon>
    </lineage>
</organism>
<organismHost>
    <name type="scientific">Aves</name>
    <dbReference type="NCBI Taxonomy" id="8782"/>
</organismHost>
<organismHost>
    <name type="scientific">Homo sapiens</name>
    <name type="common">Human</name>
    <dbReference type="NCBI Taxonomy" id="9606"/>
</organismHost>
<gene>
    <name type="primary">PA</name>
</gene>
<evidence type="ECO:0000250" key="1">
    <source>
        <dbReference type="UniProtKB" id="P0CK64"/>
    </source>
</evidence>
<evidence type="ECO:0000250" key="2">
    <source>
        <dbReference type="UniProtKB" id="P0CK68"/>
    </source>
</evidence>
<evidence type="ECO:0000250" key="3">
    <source>
        <dbReference type="UniProtKB" id="P0DJW8"/>
    </source>
</evidence>
<evidence type="ECO:0000250" key="4">
    <source>
        <dbReference type="UniProtKB" id="P0DXO5"/>
    </source>
</evidence>
<evidence type="ECO:0000305" key="5"/>
<accession>P0DJS1</accession>
<dbReference type="EMBL" id="DQ508840">
    <property type="status" value="NOT_ANNOTATED_CDS"/>
    <property type="molecule type" value="Genomic_RNA"/>
</dbReference>
<dbReference type="SMR" id="P0DJS1"/>
<dbReference type="Proteomes" id="UP000118104">
    <property type="component" value="Genome"/>
</dbReference>
<dbReference type="GO" id="GO:0003723">
    <property type="term" value="F:RNA binding"/>
    <property type="evidence" value="ECO:0007669"/>
    <property type="project" value="InterPro"/>
</dbReference>
<dbReference type="GO" id="GO:0039694">
    <property type="term" value="P:viral RNA genome replication"/>
    <property type="evidence" value="ECO:0007669"/>
    <property type="project" value="InterPro"/>
</dbReference>
<dbReference type="GO" id="GO:0075523">
    <property type="term" value="P:viral translational frameshifting"/>
    <property type="evidence" value="ECO:0007669"/>
    <property type="project" value="UniProtKB-KW"/>
</dbReference>
<dbReference type="FunFam" id="3.40.91.90:FF:000001">
    <property type="entry name" value="Polymerase acidic protein"/>
    <property type="match status" value="1"/>
</dbReference>
<dbReference type="Gene3D" id="3.40.91.90">
    <property type="entry name" value="Influenza RNA-dependent RNA polymerase subunit PA, endonuclease domain"/>
    <property type="match status" value="1"/>
</dbReference>
<dbReference type="InterPro" id="IPR001009">
    <property type="entry name" value="PA/PA-X"/>
</dbReference>
<dbReference type="InterPro" id="IPR038372">
    <property type="entry name" value="PA/PA-X_sf"/>
</dbReference>
<dbReference type="Pfam" id="PF00603">
    <property type="entry name" value="Flu_PA"/>
    <property type="match status" value="1"/>
</dbReference>
<reference key="1">
    <citation type="submission" date="2006-04" db="EMBL/GenBank/DDBJ databases">
        <title>Complete genome sequencing and analysis of selected influenza virus vaccine strains spanning six decades (1933-1999).</title>
        <authorList>
            <person name="Mbawuike I.N."/>
            <person name="Zhang Y."/>
            <person name="Yamada R.E."/>
            <person name="Nino D."/>
            <person name="Bui H.-H."/>
            <person name="Sette A."/>
            <person name="Couch R.B."/>
        </authorList>
    </citation>
    <scope>NUCLEOTIDE SEQUENCE [GENOMIC RNA]</scope>
</reference>
<keyword id="KW-1132">Decay of host mRNAs by virus</keyword>
<keyword id="KW-1262">Eukaryotic host gene expression shutoff by virus</keyword>
<keyword id="KW-1035">Host cytoplasm</keyword>
<keyword id="KW-1190">Host gene expression shutoff by virus</keyword>
<keyword id="KW-1192">Host mRNA suppression by virus</keyword>
<keyword id="KW-1048">Host nucleus</keyword>
<keyword id="KW-0945">Host-virus interaction</keyword>
<keyword id="KW-0688">Ribosomal frameshifting</keyword>